<name>SFSA_CLOBM</name>
<accession>B1KRU0</accession>
<evidence type="ECO:0000255" key="1">
    <source>
        <dbReference type="HAMAP-Rule" id="MF_00095"/>
    </source>
</evidence>
<organism>
    <name type="scientific">Clostridium botulinum (strain Loch Maree / Type A3)</name>
    <dbReference type="NCBI Taxonomy" id="498214"/>
    <lineage>
        <taxon>Bacteria</taxon>
        <taxon>Bacillati</taxon>
        <taxon>Bacillota</taxon>
        <taxon>Clostridia</taxon>
        <taxon>Eubacteriales</taxon>
        <taxon>Clostridiaceae</taxon>
        <taxon>Clostridium</taxon>
    </lineage>
</organism>
<protein>
    <recommendedName>
        <fullName evidence="1">Sugar fermentation stimulation protein homolog</fullName>
    </recommendedName>
</protein>
<proteinExistence type="inferred from homology"/>
<sequence>MKITKNILKAEFIKRPNRFQAYVKINEKIEMVHVPNTGRCKEILIPGSTVILREENNENRKTRYDLIAGYKGDMLISIDSQIPNKVVYEALMNFKIEILKEYANIKREKTFGKSRFDFKLEKENGEVYYLEVKGVTLENDGLTMFPDAPTERGTKHILELIDVKNKGMGAGVLFLIQLNGVKKFTPNHKMDKNFGEALRLAKEKGVDILAYDCLVEESSISLNNPVSIEI</sequence>
<dbReference type="EMBL" id="CP000962">
    <property type="protein sequence ID" value="ACA55025.1"/>
    <property type="molecule type" value="Genomic_DNA"/>
</dbReference>
<dbReference type="RefSeq" id="WP_012343055.1">
    <property type="nucleotide sequence ID" value="NC_010520.1"/>
</dbReference>
<dbReference type="SMR" id="B1KRU0"/>
<dbReference type="KEGG" id="cbl:CLK_3170"/>
<dbReference type="HOGENOM" id="CLU_052299_1_0_9"/>
<dbReference type="GO" id="GO:0003677">
    <property type="term" value="F:DNA binding"/>
    <property type="evidence" value="ECO:0007669"/>
    <property type="project" value="InterPro"/>
</dbReference>
<dbReference type="CDD" id="cd22359">
    <property type="entry name" value="SfsA-like_bacterial"/>
    <property type="match status" value="1"/>
</dbReference>
<dbReference type="FunFam" id="2.40.50.580:FF:000002">
    <property type="entry name" value="Sugar fermentation stimulation protein homolog"/>
    <property type="match status" value="1"/>
</dbReference>
<dbReference type="Gene3D" id="2.40.50.580">
    <property type="match status" value="1"/>
</dbReference>
<dbReference type="Gene3D" id="3.40.1350.60">
    <property type="match status" value="1"/>
</dbReference>
<dbReference type="HAMAP" id="MF_00095">
    <property type="entry name" value="SfsA"/>
    <property type="match status" value="1"/>
</dbReference>
<dbReference type="InterPro" id="IPR005224">
    <property type="entry name" value="SfsA"/>
</dbReference>
<dbReference type="InterPro" id="IPR040452">
    <property type="entry name" value="SfsA_C"/>
</dbReference>
<dbReference type="InterPro" id="IPR041465">
    <property type="entry name" value="SfsA_N"/>
</dbReference>
<dbReference type="NCBIfam" id="TIGR00230">
    <property type="entry name" value="sfsA"/>
    <property type="match status" value="1"/>
</dbReference>
<dbReference type="PANTHER" id="PTHR30545">
    <property type="entry name" value="SUGAR FERMENTATION STIMULATION PROTEIN A"/>
    <property type="match status" value="1"/>
</dbReference>
<dbReference type="PANTHER" id="PTHR30545:SF2">
    <property type="entry name" value="SUGAR FERMENTATION STIMULATION PROTEIN A"/>
    <property type="match status" value="1"/>
</dbReference>
<dbReference type="Pfam" id="PF03749">
    <property type="entry name" value="SfsA"/>
    <property type="match status" value="1"/>
</dbReference>
<dbReference type="Pfam" id="PF17746">
    <property type="entry name" value="SfsA_N"/>
    <property type="match status" value="1"/>
</dbReference>
<comment type="similarity">
    <text evidence="1">Belongs to the SfsA family.</text>
</comment>
<reference key="1">
    <citation type="journal article" date="2007" name="PLoS ONE">
        <title>Analysis of the neurotoxin complex genes in Clostridium botulinum A1-A4 and B1 strains: BoNT/A3, /Ba4 and /B1 clusters are located within plasmids.</title>
        <authorList>
            <person name="Smith T.J."/>
            <person name="Hill K.K."/>
            <person name="Foley B.T."/>
            <person name="Detter J.C."/>
            <person name="Munk A.C."/>
            <person name="Bruce D.C."/>
            <person name="Doggett N.A."/>
            <person name="Smith L.A."/>
            <person name="Marks J.D."/>
            <person name="Xie G."/>
            <person name="Brettin T.S."/>
        </authorList>
    </citation>
    <scope>NUCLEOTIDE SEQUENCE [LARGE SCALE GENOMIC DNA]</scope>
    <source>
        <strain>Loch Maree / Type A3</strain>
    </source>
</reference>
<feature type="chain" id="PRO_1000093569" description="Sugar fermentation stimulation protein homolog">
    <location>
        <begin position="1"/>
        <end position="230"/>
    </location>
</feature>
<gene>
    <name evidence="1" type="primary">sfsA</name>
    <name type="ordered locus">CLK_3170</name>
</gene>